<comment type="function">
    <text evidence="1">Catalyzes the initial step of the lipid cycle reactions in the biosynthesis of the cell wall peptidoglycan: transfers peptidoglycan precursor phospho-MurNAc-pentapeptide from UDP-MurNAc-pentapeptide onto the lipid carrier undecaprenyl phosphate, yielding undecaprenyl-pyrophosphoryl-MurNAc-pentapeptide, known as lipid I.</text>
</comment>
<comment type="catalytic activity">
    <reaction evidence="1">
        <text>UDP-N-acetyl-alpha-D-muramoyl-L-alanyl-gamma-D-glutamyl-meso-2,6-diaminopimeloyl-D-alanyl-D-alanine + di-trans,octa-cis-undecaprenyl phosphate = di-trans,octa-cis-undecaprenyl diphospho-N-acetyl-alpha-D-muramoyl-L-alanyl-D-glutamyl-meso-2,6-diaminopimeloyl-D-alanyl-D-alanine + UMP</text>
        <dbReference type="Rhea" id="RHEA:28386"/>
        <dbReference type="ChEBI" id="CHEBI:57865"/>
        <dbReference type="ChEBI" id="CHEBI:60392"/>
        <dbReference type="ChEBI" id="CHEBI:61386"/>
        <dbReference type="ChEBI" id="CHEBI:61387"/>
        <dbReference type="EC" id="2.7.8.13"/>
    </reaction>
</comment>
<comment type="cofactor">
    <cofactor evidence="1">
        <name>Mg(2+)</name>
        <dbReference type="ChEBI" id="CHEBI:18420"/>
    </cofactor>
</comment>
<comment type="pathway">
    <text evidence="1">Cell wall biogenesis; peptidoglycan biosynthesis.</text>
</comment>
<comment type="subcellular location">
    <subcellularLocation>
        <location evidence="1">Cell membrane</location>
        <topology evidence="1">Multi-pass membrane protein</topology>
    </subcellularLocation>
</comment>
<comment type="similarity">
    <text evidence="1">Belongs to the glycosyltransferase 4 family. MraY subfamily.</text>
</comment>
<organism>
    <name type="scientific">Chloroflexus aurantiacus (strain ATCC 29364 / DSM 637 / Y-400-fl)</name>
    <dbReference type="NCBI Taxonomy" id="480224"/>
    <lineage>
        <taxon>Bacteria</taxon>
        <taxon>Bacillati</taxon>
        <taxon>Chloroflexota</taxon>
        <taxon>Chloroflexia</taxon>
        <taxon>Chloroflexales</taxon>
        <taxon>Chloroflexineae</taxon>
        <taxon>Chloroflexaceae</taxon>
        <taxon>Chloroflexus</taxon>
    </lineage>
</organism>
<evidence type="ECO:0000255" key="1">
    <source>
        <dbReference type="HAMAP-Rule" id="MF_00038"/>
    </source>
</evidence>
<dbReference type="EC" id="2.7.8.13" evidence="1"/>
<dbReference type="EMBL" id="CP001364">
    <property type="protein sequence ID" value="ACM52252.1"/>
    <property type="molecule type" value="Genomic_DNA"/>
</dbReference>
<dbReference type="SMR" id="B9LKJ6"/>
<dbReference type="KEGG" id="chl:Chy400_0823"/>
<dbReference type="HOGENOM" id="CLU_023982_0_1_0"/>
<dbReference type="OrthoDB" id="9805475at2"/>
<dbReference type="UniPathway" id="UPA00219"/>
<dbReference type="GO" id="GO:0005886">
    <property type="term" value="C:plasma membrane"/>
    <property type="evidence" value="ECO:0007669"/>
    <property type="project" value="UniProtKB-SubCell"/>
</dbReference>
<dbReference type="GO" id="GO:0046872">
    <property type="term" value="F:metal ion binding"/>
    <property type="evidence" value="ECO:0007669"/>
    <property type="project" value="UniProtKB-KW"/>
</dbReference>
<dbReference type="GO" id="GO:0008963">
    <property type="term" value="F:phospho-N-acetylmuramoyl-pentapeptide-transferase activity"/>
    <property type="evidence" value="ECO:0007669"/>
    <property type="project" value="UniProtKB-UniRule"/>
</dbReference>
<dbReference type="GO" id="GO:0051992">
    <property type="term" value="F:UDP-N-acetylmuramoyl-L-alanyl-D-glutamyl-meso-2,6-diaminopimelyl-D-alanyl-D-alanine:undecaprenyl-phosphate transferase activity"/>
    <property type="evidence" value="ECO:0007669"/>
    <property type="project" value="RHEA"/>
</dbReference>
<dbReference type="GO" id="GO:0051301">
    <property type="term" value="P:cell division"/>
    <property type="evidence" value="ECO:0007669"/>
    <property type="project" value="UniProtKB-KW"/>
</dbReference>
<dbReference type="GO" id="GO:0071555">
    <property type="term" value="P:cell wall organization"/>
    <property type="evidence" value="ECO:0007669"/>
    <property type="project" value="UniProtKB-KW"/>
</dbReference>
<dbReference type="GO" id="GO:0009252">
    <property type="term" value="P:peptidoglycan biosynthetic process"/>
    <property type="evidence" value="ECO:0007669"/>
    <property type="project" value="UniProtKB-UniRule"/>
</dbReference>
<dbReference type="GO" id="GO:0008360">
    <property type="term" value="P:regulation of cell shape"/>
    <property type="evidence" value="ECO:0007669"/>
    <property type="project" value="UniProtKB-KW"/>
</dbReference>
<dbReference type="CDD" id="cd06852">
    <property type="entry name" value="GT_MraY"/>
    <property type="match status" value="1"/>
</dbReference>
<dbReference type="HAMAP" id="MF_00038">
    <property type="entry name" value="MraY"/>
    <property type="match status" value="1"/>
</dbReference>
<dbReference type="InterPro" id="IPR000715">
    <property type="entry name" value="Glycosyl_transferase_4"/>
</dbReference>
<dbReference type="InterPro" id="IPR003524">
    <property type="entry name" value="PNAcMuramoyl-5peptid_Trfase"/>
</dbReference>
<dbReference type="InterPro" id="IPR018480">
    <property type="entry name" value="PNAcMuramoyl-5peptid_Trfase_CS"/>
</dbReference>
<dbReference type="NCBIfam" id="TIGR00445">
    <property type="entry name" value="mraY"/>
    <property type="match status" value="1"/>
</dbReference>
<dbReference type="PANTHER" id="PTHR22926">
    <property type="entry name" value="PHOSPHO-N-ACETYLMURAMOYL-PENTAPEPTIDE-TRANSFERASE"/>
    <property type="match status" value="1"/>
</dbReference>
<dbReference type="PANTHER" id="PTHR22926:SF5">
    <property type="entry name" value="PHOSPHO-N-ACETYLMURAMOYL-PENTAPEPTIDE-TRANSFERASE HOMOLOG"/>
    <property type="match status" value="1"/>
</dbReference>
<dbReference type="Pfam" id="PF00953">
    <property type="entry name" value="Glycos_transf_4"/>
    <property type="match status" value="1"/>
</dbReference>
<dbReference type="PROSITE" id="PS01347">
    <property type="entry name" value="MRAY_1"/>
    <property type="match status" value="1"/>
</dbReference>
<accession>B9LKJ6</accession>
<protein>
    <recommendedName>
        <fullName evidence="1">Phospho-N-acetylmuramoyl-pentapeptide-transferase</fullName>
        <ecNumber evidence="1">2.7.8.13</ecNumber>
    </recommendedName>
    <alternativeName>
        <fullName evidence="1">UDP-MurNAc-pentapeptide phosphotransferase</fullName>
    </alternativeName>
</protein>
<proteinExistence type="inferred from homology"/>
<reference key="1">
    <citation type="submission" date="2009-01" db="EMBL/GenBank/DDBJ databases">
        <title>Complete sequence of Chloroflexus sp. Y-400-fl.</title>
        <authorList>
            <consortium name="US DOE Joint Genome Institute"/>
            <person name="Lucas S."/>
            <person name="Copeland A."/>
            <person name="Lapidus A."/>
            <person name="Glavina del Rio T."/>
            <person name="Dalin E."/>
            <person name="Tice H."/>
            <person name="Bruce D."/>
            <person name="Goodwin L."/>
            <person name="Pitluck S."/>
            <person name="Sims D."/>
            <person name="Kiss H."/>
            <person name="Brettin T."/>
            <person name="Detter J.C."/>
            <person name="Han C."/>
            <person name="Larimer F."/>
            <person name="Land M."/>
            <person name="Hauser L."/>
            <person name="Kyrpides N."/>
            <person name="Ovchinnikova G."/>
            <person name="Bryant D.A."/>
            <person name="Richardson P."/>
        </authorList>
    </citation>
    <scope>NUCLEOTIDE SEQUENCE [LARGE SCALE GENOMIC DNA]</scope>
    <source>
        <strain>ATCC 29364 / DSM 637 / Y-400-fl</strain>
    </source>
</reference>
<keyword id="KW-0131">Cell cycle</keyword>
<keyword id="KW-0132">Cell division</keyword>
<keyword id="KW-1003">Cell membrane</keyword>
<keyword id="KW-0133">Cell shape</keyword>
<keyword id="KW-0961">Cell wall biogenesis/degradation</keyword>
<keyword id="KW-0460">Magnesium</keyword>
<keyword id="KW-0472">Membrane</keyword>
<keyword id="KW-0479">Metal-binding</keyword>
<keyword id="KW-0573">Peptidoglycan synthesis</keyword>
<keyword id="KW-0808">Transferase</keyword>
<keyword id="KW-0812">Transmembrane</keyword>
<keyword id="KW-1133">Transmembrane helix</keyword>
<name>MRAY_CHLSY</name>
<gene>
    <name evidence="1" type="primary">mraY</name>
    <name type="ordered locus">Chy400_0823</name>
</gene>
<feature type="chain" id="PRO_1000117173" description="Phospho-N-acetylmuramoyl-pentapeptide-transferase">
    <location>
        <begin position="1"/>
        <end position="367"/>
    </location>
</feature>
<feature type="transmembrane region" description="Helical" evidence="1">
    <location>
        <begin position="16"/>
        <end position="36"/>
    </location>
</feature>
<feature type="transmembrane region" description="Helical" evidence="1">
    <location>
        <begin position="62"/>
        <end position="82"/>
    </location>
</feature>
<feature type="transmembrane region" description="Helical" evidence="1">
    <location>
        <begin position="87"/>
        <end position="107"/>
    </location>
</feature>
<feature type="transmembrane region" description="Helical" evidence="1">
    <location>
        <begin position="125"/>
        <end position="145"/>
    </location>
</feature>
<feature type="transmembrane region" description="Helical" evidence="1">
    <location>
        <begin position="158"/>
        <end position="178"/>
    </location>
</feature>
<feature type="transmembrane region" description="Helical" evidence="1">
    <location>
        <begin position="190"/>
        <end position="210"/>
    </location>
</feature>
<feature type="transmembrane region" description="Helical" evidence="1">
    <location>
        <begin position="214"/>
        <end position="234"/>
    </location>
</feature>
<feature type="transmembrane region" description="Helical" evidence="1">
    <location>
        <begin position="240"/>
        <end position="260"/>
    </location>
</feature>
<feature type="transmembrane region" description="Helical" evidence="1">
    <location>
        <begin position="264"/>
        <end position="284"/>
    </location>
</feature>
<feature type="transmembrane region" description="Helical" evidence="1">
    <location>
        <begin position="326"/>
        <end position="346"/>
    </location>
</feature>
<sequence>MSVLRAVLVQDMARALLLAAAAFVLTLIIGGWWVRFARRHKLGKRIRPDGPQSHLVKVGTPTMGGIMIVSTVLILTILFNLVDRWSMLLPLGVMVSFAVLGAIDDWLSLTGSRSKTHGFTVRFKFWIMMAVAFVASLALYLPQPYGLEHEGLVQIPFVGEVNIGLWFIPIAVLIIVFISNAVNITDGLDSLAGWNLTLAFGAYGVITFLAEPRLTNLMAFCFTVVGACAAFLWYNAYPAQVFMGDLGALALGATLAVVALQSQQWLLLPVIGIVFVVEALSTMIQTGYFKWTKWRYGEGRRIFKMAPLHHHFELLGWSQPQVTQRFVLIGTVAAMVGISLALIFGPPATGLQVDQPGIIVIEGDGSR</sequence>